<keyword id="KW-0012">Acyltransferase</keyword>
<keyword id="KW-0275">Fatty acid biosynthesis</keyword>
<keyword id="KW-0276">Fatty acid metabolism</keyword>
<keyword id="KW-0444">Lipid biosynthesis</keyword>
<keyword id="KW-0443">Lipid metabolism</keyword>
<keyword id="KW-0511">Multifunctional enzyme</keyword>
<keyword id="KW-0521">NADP</keyword>
<keyword id="KW-0596">Phosphopantetheine</keyword>
<keyword id="KW-0597">Phosphoprotein</keyword>
<keyword id="KW-1185">Reference proteome</keyword>
<keyword id="KW-0808">Transferase</keyword>
<evidence type="ECO:0000250" key="1">
    <source>
        <dbReference type="UniProtKB" id="A0R1E8"/>
    </source>
</evidence>
<evidence type="ECO:0000250" key="2">
    <source>
        <dbReference type="UniProtKB" id="P96202"/>
    </source>
</evidence>
<evidence type="ECO:0000250" key="3">
    <source>
        <dbReference type="UniProtKB" id="Q03131"/>
    </source>
</evidence>
<evidence type="ECO:0000255" key="4">
    <source>
        <dbReference type="PROSITE-ProRule" id="PRU00258"/>
    </source>
</evidence>
<evidence type="ECO:0000255" key="5">
    <source>
        <dbReference type="PROSITE-ProRule" id="PRU01348"/>
    </source>
</evidence>
<evidence type="ECO:0000255" key="6">
    <source>
        <dbReference type="PROSITE-ProRule" id="PRU01363"/>
    </source>
</evidence>
<evidence type="ECO:0000269" key="7">
    <source>
    </source>
</evidence>
<evidence type="ECO:0000269" key="8">
    <source>
    </source>
</evidence>
<evidence type="ECO:0000269" key="9">
    <source>
    </source>
</evidence>
<evidence type="ECO:0000269" key="10">
    <source>
    </source>
</evidence>
<evidence type="ECO:0000269" key="11">
    <source>
    </source>
</evidence>
<evidence type="ECO:0000269" key="12">
    <source>
    </source>
</evidence>
<evidence type="ECO:0000303" key="13">
    <source>
    </source>
</evidence>
<evidence type="ECO:0000303" key="14">
    <source>
    </source>
</evidence>
<evidence type="ECO:0000305" key="15"/>
<evidence type="ECO:0000305" key="16">
    <source>
    </source>
</evidence>
<protein>
    <recommendedName>
        <fullName evidence="15">Phthioceranic/hydroxyphthioceranic acid synthase</fullName>
        <ecNumber evidence="8">2.3.1.287</ecNumber>
    </recommendedName>
    <alternativeName>
        <fullName>Polyketide synthase pks2</fullName>
    </alternativeName>
</protein>
<organism>
    <name type="scientific">Mycobacterium tuberculosis (strain ATCC 25618 / H37Rv)</name>
    <dbReference type="NCBI Taxonomy" id="83332"/>
    <lineage>
        <taxon>Bacteria</taxon>
        <taxon>Bacillati</taxon>
        <taxon>Actinomycetota</taxon>
        <taxon>Actinomycetes</taxon>
        <taxon>Mycobacteriales</taxon>
        <taxon>Mycobacteriaceae</taxon>
        <taxon>Mycobacterium</taxon>
        <taxon>Mycobacterium tuberculosis complex</taxon>
    </lineage>
</organism>
<accession>P9WQE9</accession>
<accession>L0TDW7</accession>
<accession>O07798</accession>
<accession>Q7D4T0</accession>
<gene>
    <name evidence="14" type="primary">pks2</name>
    <name evidence="13" type="synonym">msl2</name>
    <name type="ordered locus">Rv3825c</name>
</gene>
<reference key="1">
    <citation type="journal article" date="1998" name="Nature">
        <title>Deciphering the biology of Mycobacterium tuberculosis from the complete genome sequence.</title>
        <authorList>
            <person name="Cole S.T."/>
            <person name="Brosch R."/>
            <person name="Parkhill J."/>
            <person name="Garnier T."/>
            <person name="Churcher C.M."/>
            <person name="Harris D.E."/>
            <person name="Gordon S.V."/>
            <person name="Eiglmeier K."/>
            <person name="Gas S."/>
            <person name="Barry C.E. III"/>
            <person name="Tekaia F."/>
            <person name="Badcock K."/>
            <person name="Basham D."/>
            <person name="Brown D."/>
            <person name="Chillingworth T."/>
            <person name="Connor R."/>
            <person name="Davies R.M."/>
            <person name="Devlin K."/>
            <person name="Feltwell T."/>
            <person name="Gentles S."/>
            <person name="Hamlin N."/>
            <person name="Holroyd S."/>
            <person name="Hornsby T."/>
            <person name="Jagels K."/>
            <person name="Krogh A."/>
            <person name="McLean J."/>
            <person name="Moule S."/>
            <person name="Murphy L.D."/>
            <person name="Oliver S."/>
            <person name="Osborne J."/>
            <person name="Quail M.A."/>
            <person name="Rajandream M.A."/>
            <person name="Rogers J."/>
            <person name="Rutter S."/>
            <person name="Seeger K."/>
            <person name="Skelton S."/>
            <person name="Squares S."/>
            <person name="Squares R."/>
            <person name="Sulston J.E."/>
            <person name="Taylor K."/>
            <person name="Whitehead S."/>
            <person name="Barrell B.G."/>
        </authorList>
    </citation>
    <scope>NUCLEOTIDE SEQUENCE [LARGE SCALE GENOMIC DNA]</scope>
    <source>
        <strain>ATCC 25618 / H37Rv</strain>
    </source>
</reference>
<reference key="2">
    <citation type="journal article" date="1999" name="Proc. Natl. Acad. Sci. U.S.A.">
        <title>Identification of Mycobacterium tuberculosis RNAs synthesized in response to phagocytosis by human macrophages by selective capture of transcribed sequences (SCOTS).</title>
        <authorList>
            <person name="Graham J.E."/>
            <person name="Clark-Curtiss J.E."/>
        </authorList>
    </citation>
    <scope>INDUCTION</scope>
    <source>
        <strain>ATCC 25618 / H37Rv</strain>
    </source>
</reference>
<reference key="3">
    <citation type="journal article" date="2001" name="J. Biol. Chem.">
        <title>The Mycobacterium tuberculosis pks2 gene encodes the synthase for the hepta- and octamethyl-branched fatty acids required for sulfolipid synthesis.</title>
        <authorList>
            <person name="Sirakova T.D."/>
            <person name="Thirumala A.K."/>
            <person name="Dubey V.S."/>
            <person name="Sprecher H."/>
            <person name="Kolattukudy P.E."/>
        </authorList>
    </citation>
    <scope>FUNCTION IN SULFOLIPID-1 BIOSYNTHESIS</scope>
    <scope>CATALYTIC ACTIVITY</scope>
    <scope>PATHWAY</scope>
    <scope>DISRUPTION PHENOTYPE</scope>
    <source>
        <strain>ATCC 25618 / H37Rv</strain>
    </source>
</reference>
<reference key="4">
    <citation type="journal article" date="2003" name="Proc. Natl. Acad. Sci. U.S.A.">
        <title>MmpL8 is required for sulfolipid-1 biosynthesis and Mycobacterium tuberculosis virulence.</title>
        <authorList>
            <person name="Converse S.E."/>
            <person name="Mougous J.D."/>
            <person name="Leavell M.D."/>
            <person name="Leary J.A."/>
            <person name="Bertozzi C.R."/>
            <person name="Cox J.S."/>
        </authorList>
    </citation>
    <scope>FUNCTION IN SULFOLIPID-1 BIOSYNTHESIS</scope>
    <scope>PATHWAY</scope>
    <source>
        <strain>ATCC 35801 / TMC 107 / Erdman</strain>
    </source>
</reference>
<reference key="5">
    <citation type="journal article" date="2006" name="Mol. Microbiol.">
        <title>The Mycobacterium tuberculosis PhoPR two-component system regulates genes essential for virulence and complex lipid biosynthesis.</title>
        <authorList>
            <person name="Walters S.B."/>
            <person name="Dubnau E."/>
            <person name="Kolesnikova I."/>
            <person name="Laval F."/>
            <person name="Daffe M."/>
            <person name="Smith I."/>
        </authorList>
    </citation>
    <scope>REGULATION BY PHOP/PHOR</scope>
    <source>
        <strain>ATCC 25618 / H37Rv</strain>
    </source>
</reference>
<reference key="6">
    <citation type="journal article" date="2007" name="Nat. Prod. Rep.">
        <title>Versatile polyketide enzymatic machinery for the biosynthesis of complex mycobacterial lipids.</title>
        <authorList>
            <person name="Gokhale R.S."/>
            <person name="Saxena P."/>
            <person name="Chopra T."/>
            <person name="Mohanty D."/>
        </authorList>
    </citation>
    <scope>PATHWAY</scope>
    <scope>REVIEW</scope>
</reference>
<reference key="7">
    <citation type="journal article" date="2008" name="BMC Syst. Biol.">
        <title>targetTB: a target identification pipeline for Mycobacterium tuberculosis through an interactome, reactome and genome-scale structural analysis.</title>
        <authorList>
            <person name="Raman K."/>
            <person name="Yeturu K."/>
            <person name="Chandra N."/>
        </authorList>
    </citation>
    <scope>IDENTIFICATION AS A DRUG TARGET [LARGE SCALE ANALYSIS]</scope>
</reference>
<reference key="8">
    <citation type="journal article" date="2011" name="Mol. Cell. Proteomics">
        <title>Proteogenomic analysis of Mycobacterium tuberculosis by high resolution mass spectrometry.</title>
        <authorList>
            <person name="Kelkar D.S."/>
            <person name="Kumar D."/>
            <person name="Kumar P."/>
            <person name="Balakrishnan L."/>
            <person name="Muthusamy B."/>
            <person name="Yadav A.K."/>
            <person name="Shrivastava P."/>
            <person name="Marimuthu A."/>
            <person name="Anand S."/>
            <person name="Sundaram H."/>
            <person name="Kingsbury R."/>
            <person name="Harsha H.C."/>
            <person name="Nair B."/>
            <person name="Prasad T.S."/>
            <person name="Chauhan D.S."/>
            <person name="Katoch K."/>
            <person name="Katoch V.M."/>
            <person name="Kumar P."/>
            <person name="Chaerkady R."/>
            <person name="Ramachandran S."/>
            <person name="Dash D."/>
            <person name="Pandey A."/>
        </authorList>
    </citation>
    <scope>IDENTIFICATION BY MASS SPECTROMETRY [LARGE SCALE ANALYSIS]</scope>
    <source>
        <strain>ATCC 25618 / H37Rv</strain>
    </source>
</reference>
<reference key="9">
    <citation type="journal article" date="2014" name="Cell. Microbiol.">
        <title>Multiple deletions in the polyketide synthase gene repertoire of Mycobacterium tuberculosis reveal functional overlap of cell envelope lipids in host-pathogen interactions.</title>
        <authorList>
            <person name="Passemar C."/>
            <person name="Arbues A."/>
            <person name="Malaga W."/>
            <person name="Mercier I."/>
            <person name="Moreau F."/>
            <person name="Lepourry L."/>
            <person name="Neyrolles O."/>
            <person name="Guilhot C."/>
            <person name="Astarie-Dequeker C."/>
        </authorList>
    </citation>
    <scope>PATHWAY</scope>
    <scope>DISRUPTION PHENOTYPE</scope>
    <source>
        <strain>H37Rv</strain>
    </source>
</reference>
<proteinExistence type="evidence at protein level"/>
<dbReference type="EC" id="2.3.1.287" evidence="8"/>
<dbReference type="EMBL" id="AL123456">
    <property type="protein sequence ID" value="CCP46654.1"/>
    <property type="molecule type" value="Genomic_DNA"/>
</dbReference>
<dbReference type="PIR" id="E70522">
    <property type="entry name" value="E70522"/>
</dbReference>
<dbReference type="RefSeq" id="NP_218342.1">
    <property type="nucleotide sequence ID" value="NC_000962.3"/>
</dbReference>
<dbReference type="RefSeq" id="WP_003900763.1">
    <property type="nucleotide sequence ID" value="NZ_NVQJ01000022.1"/>
</dbReference>
<dbReference type="SMR" id="P9WQE9"/>
<dbReference type="FunCoup" id="P9WQE9">
    <property type="interactions" value="18"/>
</dbReference>
<dbReference type="STRING" id="83332.Rv3825c"/>
<dbReference type="PaxDb" id="83332-Rv3825c"/>
<dbReference type="GeneID" id="886148"/>
<dbReference type="KEGG" id="mtu:Rv3825c"/>
<dbReference type="KEGG" id="mtv:RVBD_3825c"/>
<dbReference type="TubercuList" id="Rv3825c"/>
<dbReference type="eggNOG" id="COG0604">
    <property type="taxonomic scope" value="Bacteria"/>
</dbReference>
<dbReference type="eggNOG" id="COG1028">
    <property type="taxonomic scope" value="Bacteria"/>
</dbReference>
<dbReference type="eggNOG" id="COG3321">
    <property type="taxonomic scope" value="Bacteria"/>
</dbReference>
<dbReference type="InParanoid" id="P9WQE9"/>
<dbReference type="OrthoDB" id="9778690at2"/>
<dbReference type="PhylomeDB" id="P9WQE9"/>
<dbReference type="BioCyc" id="MetaCyc:G185E-8121-MONOMER"/>
<dbReference type="BRENDA" id="2.3.1.252">
    <property type="organism ID" value="3445"/>
</dbReference>
<dbReference type="UniPathway" id="UPA00094"/>
<dbReference type="UniPathway" id="UPA01063"/>
<dbReference type="PHI-base" id="PHI:7221"/>
<dbReference type="Proteomes" id="UP000001584">
    <property type="component" value="Chromosome"/>
</dbReference>
<dbReference type="GO" id="GO:0005737">
    <property type="term" value="C:cytoplasm"/>
    <property type="evidence" value="ECO:0000318"/>
    <property type="project" value="GO_Central"/>
</dbReference>
<dbReference type="GO" id="GO:0005829">
    <property type="term" value="C:cytosol"/>
    <property type="evidence" value="ECO:0007005"/>
    <property type="project" value="MTBBASE"/>
</dbReference>
<dbReference type="GO" id="GO:0009274">
    <property type="term" value="C:peptidoglycan-based cell wall"/>
    <property type="evidence" value="ECO:0007005"/>
    <property type="project" value="MTBBASE"/>
</dbReference>
<dbReference type="GO" id="GO:0005886">
    <property type="term" value="C:plasma membrane"/>
    <property type="evidence" value="ECO:0007005"/>
    <property type="project" value="MTBBASE"/>
</dbReference>
<dbReference type="GO" id="GO:0004315">
    <property type="term" value="F:3-oxoacyl-[acyl-carrier-protein] synthase activity"/>
    <property type="evidence" value="ECO:0007669"/>
    <property type="project" value="InterPro"/>
</dbReference>
<dbReference type="GO" id="GO:0004312">
    <property type="term" value="F:fatty acid synthase activity"/>
    <property type="evidence" value="ECO:0000318"/>
    <property type="project" value="GO_Central"/>
</dbReference>
<dbReference type="GO" id="GO:0016491">
    <property type="term" value="F:oxidoreductase activity"/>
    <property type="evidence" value="ECO:0007669"/>
    <property type="project" value="InterPro"/>
</dbReference>
<dbReference type="GO" id="GO:0031177">
    <property type="term" value="F:phosphopantetheine binding"/>
    <property type="evidence" value="ECO:0007669"/>
    <property type="project" value="InterPro"/>
</dbReference>
<dbReference type="GO" id="GO:0010106">
    <property type="term" value="P:cellular response to iron ion starvation"/>
    <property type="evidence" value="ECO:0000270"/>
    <property type="project" value="MTBBASE"/>
</dbReference>
<dbReference type="GO" id="GO:0071770">
    <property type="term" value="P:DIM/DIP cell wall layer assembly"/>
    <property type="evidence" value="ECO:0000318"/>
    <property type="project" value="GO_Central"/>
</dbReference>
<dbReference type="GO" id="GO:0006633">
    <property type="term" value="P:fatty acid biosynthetic process"/>
    <property type="evidence" value="ECO:0000314"/>
    <property type="project" value="MTBBASE"/>
</dbReference>
<dbReference type="CDD" id="cd05195">
    <property type="entry name" value="enoyl_red"/>
    <property type="match status" value="1"/>
</dbReference>
<dbReference type="CDD" id="cd08955">
    <property type="entry name" value="KR_2_FAS_SDR_x"/>
    <property type="match status" value="1"/>
</dbReference>
<dbReference type="CDD" id="cd00833">
    <property type="entry name" value="PKS"/>
    <property type="match status" value="1"/>
</dbReference>
<dbReference type="FunFam" id="1.10.1200.10:FF:000014">
    <property type="entry name" value="Multifunctional mycocerosic acid synthase"/>
    <property type="match status" value="1"/>
</dbReference>
<dbReference type="FunFam" id="3.10.129.110:FF:000004">
    <property type="entry name" value="Multifunctional mycocerosic acid synthase"/>
    <property type="match status" value="1"/>
</dbReference>
<dbReference type="FunFam" id="3.40.50.720:FF:000416">
    <property type="entry name" value="Multifunctional mycocerosic acid synthase"/>
    <property type="match status" value="1"/>
</dbReference>
<dbReference type="FunFam" id="3.40.50.720:FF:000372">
    <property type="entry name" value="Mycocerosic acid synthase-like polyketide synthase"/>
    <property type="match status" value="1"/>
</dbReference>
<dbReference type="FunFam" id="3.30.70.250:FF:000003">
    <property type="entry name" value="Polyketide beta-ketoacyl synthase Pks3"/>
    <property type="match status" value="1"/>
</dbReference>
<dbReference type="FunFam" id="3.40.50.720:FF:000209">
    <property type="entry name" value="Polyketide synthase Pks12"/>
    <property type="match status" value="1"/>
</dbReference>
<dbReference type="FunFam" id="3.40.47.10:FF:000019">
    <property type="entry name" value="Polyketide synthase type I"/>
    <property type="match status" value="1"/>
</dbReference>
<dbReference type="Gene3D" id="3.40.47.10">
    <property type="match status" value="1"/>
</dbReference>
<dbReference type="Gene3D" id="1.10.1200.10">
    <property type="entry name" value="ACP-like"/>
    <property type="match status" value="1"/>
</dbReference>
<dbReference type="Gene3D" id="3.30.70.250">
    <property type="entry name" value="Malonyl-CoA ACP transacylase, ACP-binding"/>
    <property type="match status" value="1"/>
</dbReference>
<dbReference type="Gene3D" id="3.40.366.10">
    <property type="entry name" value="Malonyl-Coenzyme A Acyl Carrier Protein, domain 2"/>
    <property type="match status" value="1"/>
</dbReference>
<dbReference type="Gene3D" id="3.90.180.10">
    <property type="entry name" value="Medium-chain alcohol dehydrogenases, catalytic domain"/>
    <property type="match status" value="1"/>
</dbReference>
<dbReference type="Gene3D" id="3.40.50.720">
    <property type="entry name" value="NAD(P)-binding Rossmann-like Domain"/>
    <property type="match status" value="2"/>
</dbReference>
<dbReference type="Gene3D" id="3.10.129.110">
    <property type="entry name" value="Polyketide synthase dehydratase"/>
    <property type="match status" value="1"/>
</dbReference>
<dbReference type="InterPro" id="IPR001227">
    <property type="entry name" value="Ac_transferase_dom_sf"/>
</dbReference>
<dbReference type="InterPro" id="IPR036736">
    <property type="entry name" value="ACP-like_sf"/>
</dbReference>
<dbReference type="InterPro" id="IPR014043">
    <property type="entry name" value="Acyl_transferase_dom"/>
</dbReference>
<dbReference type="InterPro" id="IPR016035">
    <property type="entry name" value="Acyl_Trfase/lysoPLipase"/>
</dbReference>
<dbReference type="InterPro" id="IPR013149">
    <property type="entry name" value="ADH-like_C"/>
</dbReference>
<dbReference type="InterPro" id="IPR013154">
    <property type="entry name" value="ADH-like_N"/>
</dbReference>
<dbReference type="InterPro" id="IPR011032">
    <property type="entry name" value="GroES-like_sf"/>
</dbReference>
<dbReference type="InterPro" id="IPR018201">
    <property type="entry name" value="Ketoacyl_synth_AS"/>
</dbReference>
<dbReference type="InterPro" id="IPR014031">
    <property type="entry name" value="Ketoacyl_synth_C"/>
</dbReference>
<dbReference type="InterPro" id="IPR014030">
    <property type="entry name" value="Ketoacyl_synth_N"/>
</dbReference>
<dbReference type="InterPro" id="IPR016036">
    <property type="entry name" value="Malonyl_transacylase_ACP-bd"/>
</dbReference>
<dbReference type="InterPro" id="IPR053386">
    <property type="entry name" value="MBFA_synthase"/>
</dbReference>
<dbReference type="InterPro" id="IPR036291">
    <property type="entry name" value="NAD(P)-bd_dom_sf"/>
</dbReference>
<dbReference type="InterPro" id="IPR032821">
    <property type="entry name" value="PKS_assoc"/>
</dbReference>
<dbReference type="InterPro" id="IPR020841">
    <property type="entry name" value="PKS_Beta-ketoAc_synthase_dom"/>
</dbReference>
<dbReference type="InterPro" id="IPR042104">
    <property type="entry name" value="PKS_dehydratase_sf"/>
</dbReference>
<dbReference type="InterPro" id="IPR020807">
    <property type="entry name" value="PKS_DH"/>
</dbReference>
<dbReference type="InterPro" id="IPR049551">
    <property type="entry name" value="PKS_DH_C"/>
</dbReference>
<dbReference type="InterPro" id="IPR049552">
    <property type="entry name" value="PKS_DH_N"/>
</dbReference>
<dbReference type="InterPro" id="IPR020843">
    <property type="entry name" value="PKS_ER"/>
</dbReference>
<dbReference type="InterPro" id="IPR013968">
    <property type="entry name" value="PKS_KR"/>
</dbReference>
<dbReference type="InterPro" id="IPR049900">
    <property type="entry name" value="PKS_mFAS_DH"/>
</dbReference>
<dbReference type="InterPro" id="IPR050091">
    <property type="entry name" value="PKS_NRPS_Biosynth_Enz"/>
</dbReference>
<dbReference type="InterPro" id="IPR020806">
    <property type="entry name" value="PKS_PP-bd"/>
</dbReference>
<dbReference type="InterPro" id="IPR009081">
    <property type="entry name" value="PP-bd_ACP"/>
</dbReference>
<dbReference type="InterPro" id="IPR006162">
    <property type="entry name" value="Ppantetheine_attach_site"/>
</dbReference>
<dbReference type="InterPro" id="IPR016039">
    <property type="entry name" value="Thiolase-like"/>
</dbReference>
<dbReference type="NCBIfam" id="NF041183">
    <property type="entry name" value="Pks2_ls1_myc"/>
    <property type="match status" value="1"/>
</dbReference>
<dbReference type="PANTHER" id="PTHR43775">
    <property type="entry name" value="FATTY ACID SYNTHASE"/>
    <property type="match status" value="1"/>
</dbReference>
<dbReference type="PANTHER" id="PTHR43775:SF37">
    <property type="entry name" value="SI:DKEY-61P9.11"/>
    <property type="match status" value="1"/>
</dbReference>
<dbReference type="Pfam" id="PF00698">
    <property type="entry name" value="Acyl_transf_1"/>
    <property type="match status" value="1"/>
</dbReference>
<dbReference type="Pfam" id="PF08240">
    <property type="entry name" value="ADH_N"/>
    <property type="match status" value="1"/>
</dbReference>
<dbReference type="Pfam" id="PF00107">
    <property type="entry name" value="ADH_zinc_N"/>
    <property type="match status" value="1"/>
</dbReference>
<dbReference type="Pfam" id="PF16197">
    <property type="entry name" value="KAsynt_C_assoc"/>
    <property type="match status" value="1"/>
</dbReference>
<dbReference type="Pfam" id="PF00109">
    <property type="entry name" value="ketoacyl-synt"/>
    <property type="match status" value="1"/>
</dbReference>
<dbReference type="Pfam" id="PF02801">
    <property type="entry name" value="Ketoacyl-synt_C"/>
    <property type="match status" value="1"/>
</dbReference>
<dbReference type="Pfam" id="PF08659">
    <property type="entry name" value="KR"/>
    <property type="match status" value="1"/>
</dbReference>
<dbReference type="Pfam" id="PF21089">
    <property type="entry name" value="PKS_DH_N"/>
    <property type="match status" value="1"/>
</dbReference>
<dbReference type="Pfam" id="PF00550">
    <property type="entry name" value="PP-binding"/>
    <property type="match status" value="1"/>
</dbReference>
<dbReference type="Pfam" id="PF14765">
    <property type="entry name" value="PS-DH"/>
    <property type="match status" value="1"/>
</dbReference>
<dbReference type="SMART" id="SM00827">
    <property type="entry name" value="PKS_AT"/>
    <property type="match status" value="1"/>
</dbReference>
<dbReference type="SMART" id="SM00826">
    <property type="entry name" value="PKS_DH"/>
    <property type="match status" value="1"/>
</dbReference>
<dbReference type="SMART" id="SM00829">
    <property type="entry name" value="PKS_ER"/>
    <property type="match status" value="1"/>
</dbReference>
<dbReference type="SMART" id="SM00822">
    <property type="entry name" value="PKS_KR"/>
    <property type="match status" value="1"/>
</dbReference>
<dbReference type="SMART" id="SM00825">
    <property type="entry name" value="PKS_KS"/>
    <property type="match status" value="1"/>
</dbReference>
<dbReference type="SMART" id="SM00823">
    <property type="entry name" value="PKS_PP"/>
    <property type="match status" value="1"/>
</dbReference>
<dbReference type="SUPFAM" id="SSF47336">
    <property type="entry name" value="ACP-like"/>
    <property type="match status" value="1"/>
</dbReference>
<dbReference type="SUPFAM" id="SSF52151">
    <property type="entry name" value="FabD/lysophospholipase-like"/>
    <property type="match status" value="1"/>
</dbReference>
<dbReference type="SUPFAM" id="SSF50129">
    <property type="entry name" value="GroES-like"/>
    <property type="match status" value="1"/>
</dbReference>
<dbReference type="SUPFAM" id="SSF51735">
    <property type="entry name" value="NAD(P)-binding Rossmann-fold domains"/>
    <property type="match status" value="3"/>
</dbReference>
<dbReference type="SUPFAM" id="SSF55048">
    <property type="entry name" value="Probable ACP-binding domain of malonyl-CoA ACP transacylase"/>
    <property type="match status" value="1"/>
</dbReference>
<dbReference type="SUPFAM" id="SSF53901">
    <property type="entry name" value="Thiolase-like"/>
    <property type="match status" value="1"/>
</dbReference>
<dbReference type="PROSITE" id="PS50075">
    <property type="entry name" value="CARRIER"/>
    <property type="match status" value="1"/>
</dbReference>
<dbReference type="PROSITE" id="PS00606">
    <property type="entry name" value="KS3_1"/>
    <property type="match status" value="1"/>
</dbReference>
<dbReference type="PROSITE" id="PS52004">
    <property type="entry name" value="KS3_2"/>
    <property type="match status" value="1"/>
</dbReference>
<dbReference type="PROSITE" id="PS00012">
    <property type="entry name" value="PHOSPHOPANTETHEINE"/>
    <property type="match status" value="1"/>
</dbReference>
<dbReference type="PROSITE" id="PS52019">
    <property type="entry name" value="PKS_MFAS_DH"/>
    <property type="match status" value="1"/>
</dbReference>
<sequence>MGLGSAASGTGADRGAWTLAEPRVTPVAVIGMACRLPGGIDSPELLWKALLRGDDLITEVPPDRWDCDEFYDPQPGVPGRTVCKWGGFLDNPADFDCEFFGIGEREAIAIDPQQRLLLETSWEAMEHAGLTQQTLAGSATGVFAGVTHGDYTMVAADAKQLEEPYGYLGNSFSMASGRVAYAMRLHGPAITVDTACSSGLTAVHMACRSLHEGESDVALAGGVALMLEPRKAAAGSALGMLSPTGRCRAFDVAADGFVSGEGCAVVVLKRLPDALADGDRILAVIRGTSANQDGHTVNIATPSQPAQVAAYRAALAAGGVDAATVGMVEAHGPGTPIGDPIEYASVSEVYGVDGPCALASVKTNFGHTQSTAGVLGLIKVVLALKHGVVPRNLHFTRLPDEIAGITTNLFVPEVTTPWPTNGRQVPRRAAVSSYGFSGTNVHAVVEQAPQTEAQPHAASTPPTGTPALFTLSASSADALRQTAQRLTDWIQQHADSLVLSDLAYTLARRRTHRSVRTAVIASSVDELIAGLGEVADGDTVYQPAVGQDDRGPVWLFSGQGSQWAAMGADLLTNESVFAATVAELEPLIAAESGFSVTEAMTAPETVTGIDRVQPTIFAMQVALAATMAAYGVRPGAVIGHSMGESAAAVVAGVLSAEDGVRVICRRSKLMATIAGSAAMASVELPALAVQSELTALGIDDVVVAVVTAPQSTVIAGGTESVRKLVDIWERRDVLARAVAVDVASHSPQVDPILDELIAALADLNPKAPEIPYYSATLFDPREAPACDARYWADNLRHTVRFSAAVRSALDDGYRVFAELSPHPLLTHAVDQIAGSVGMPVAALAGMRREQPLPLGLRRLLTDLHNAGAAVDFSVLCPQGRLVDAPLPAWSHRFLFYDREGVDNRSPGGSTVAVHPLLGAHVRLPEEPERHAWQADVGTATLPWLGDHRIHNVAALPGAAYCEMALSAARAVLGEQSEVRDMRFEAMLLLDDQTPVSTVATVTSPGVVDFAVEALQEGVGHHLRRASAVLQQVSGECEPPAYDMASLLEAHPCRVDGEDLRRQFDKHGVQYGPAFTGLAVAYVAEDATATMLAEVALPGSIRSQQGLYAIHPALLDACFQSVGAHPDSQSVGSGLLVPLGVRRVRAYAPVRTARYCYTRVTKVELVGVEADIDVLDAHGTVLLAVCGLRIGTGVSERDKHNRVLNERLLTIEWHQRELPEMDPSGAGKWLLISDCAASDVTATRLADAFREHSAACTTMRWPLHDDQLAAADQLRDQVGSDEFSGVVVLTGSNTGTPHQGSADRGAEYVRRLVGIARELSDLPGAVPRMYVVTRGAQRVLADDCVNLEQGGLRGLLRTIGAEHPHLRATQIDVDEQTGVEQLARQLLATSEEDETAWRDNEWYVARLCPTPLRPQERRTIVADHQQSGMRLQIRTPGDMQTIELAAFHRVPPGPGQIEVAVRASSVNFADVLIAFGRYPSFEGHLPQLGTDFAGVVTAVGPGVTDHKVGDHVGGMSPNGCWGTFVTCDARLAATLPPGLGDAQAAAVTTAHATAWYGLHELARIRAGDTVLIHSGTGGVGQAAIAIARAAGAEIFATAGTPQRRELLRNMGIEHVYDSRSIEFAEQIRRDTNGRGVDVVLNSVTGAAQLAGLKLLAFRGRFVEIGKRDIYGDTKLGLFPFRRNLSFYAVDLGLLSATHPEELRDLLGTVYRLTAAGELPMPQSTHYPLVEAATAIRVMGNAEHTGKLVLHIPQTGKSLVTLPPEQAQVFRPDGSYIITGGLGGLGLFLAEKMAAAGCGRIVLNSRTQPTQKMRETIEAIAAMGSEVVVECGDIAQPGTAERLVATAVATGLPVRGVLHAAAVVEDATLANITDELLARDWAPKVHGAWELHEATSGQPLDWFCLFSSAAALTGSPGQSAYSAANSWLDAFAHWRQAQGLPATAIAWGAWSDIGQLGWWSASPARASALEESNYTAITPDEGAYAFEALLRHNRVYTGYAPVIGAPWLVAFAERSRFFEVFSSSNGSGTSKFRVELNELPRDEWPARLRQLVAEQVSLILRRTVDPDRPLPEYGLDSLGALELRTRIETETGIRLAPKNVSATVRGLADHLYEQLAPDDAPAAALSSQ</sequence>
<comment type="function">
    <text evidence="8 9">Involved in sulfolipid-1 biosynthesis (PubMed:11278910, PubMed:12724526). Catalyzes the synthesis of the hepta- and octamethyl phthioceranic and hydroxyphthioceranic acids, the methyl-branched acyl constituents of sulfolipids (PubMed:11278910).</text>
</comment>
<comment type="catalytic activity">
    <reaction evidence="8">
        <text>hexadecanoyl-[(hydroxy)phthioceranic acid synthase] + 7 (S)-methylmalonyl-CoA + 14 NADPH + 21 H(+) = C37-phthioceranyl-[(hydroxy)phthioceranic acid synthase] + 7 CO2 + 14 NADP(+) + 7 CoA + 7 H2O</text>
        <dbReference type="Rhea" id="RHEA:58908"/>
        <dbReference type="Rhea" id="RHEA-COMP:15244"/>
        <dbReference type="Rhea" id="RHEA-COMP:15246"/>
        <dbReference type="ChEBI" id="CHEBI:15377"/>
        <dbReference type="ChEBI" id="CHEBI:15378"/>
        <dbReference type="ChEBI" id="CHEBI:16526"/>
        <dbReference type="ChEBI" id="CHEBI:57287"/>
        <dbReference type="ChEBI" id="CHEBI:57327"/>
        <dbReference type="ChEBI" id="CHEBI:57783"/>
        <dbReference type="ChEBI" id="CHEBI:58349"/>
        <dbReference type="ChEBI" id="CHEBI:78483"/>
        <dbReference type="ChEBI" id="CHEBI:142473"/>
        <dbReference type="EC" id="2.3.1.287"/>
    </reaction>
</comment>
<comment type="catalytic activity">
    <reaction evidence="8">
        <text>hexadecanoyl-[(hydroxy)phthioceranic acid synthase] + 8 (S)-methylmalonyl-CoA + 16 NADPH + 24 H(+) = C40-phthioceranyl-[(hydroxy)phthioceranic acid synthase] + 8 CO2 + 16 NADP(+) + 8 CoA + 8 H2O</text>
        <dbReference type="Rhea" id="RHEA:58904"/>
        <dbReference type="Rhea" id="RHEA-COMP:15244"/>
        <dbReference type="Rhea" id="RHEA-COMP:15245"/>
        <dbReference type="ChEBI" id="CHEBI:15377"/>
        <dbReference type="ChEBI" id="CHEBI:15378"/>
        <dbReference type="ChEBI" id="CHEBI:16526"/>
        <dbReference type="ChEBI" id="CHEBI:57287"/>
        <dbReference type="ChEBI" id="CHEBI:57327"/>
        <dbReference type="ChEBI" id="CHEBI:57783"/>
        <dbReference type="ChEBI" id="CHEBI:58349"/>
        <dbReference type="ChEBI" id="CHEBI:78483"/>
        <dbReference type="ChEBI" id="CHEBI:142472"/>
        <dbReference type="EC" id="2.3.1.287"/>
    </reaction>
</comment>
<comment type="cofactor">
    <cofactor evidence="2">
        <name>pantetheine 4'-phosphate</name>
        <dbReference type="ChEBI" id="CHEBI:47942"/>
    </cofactor>
    <text evidence="2">Binds 1 phosphopantetheine covalently.</text>
</comment>
<comment type="pathway">
    <text evidence="8 9 16">Lipid metabolism; fatty acid biosynthesis.</text>
</comment>
<comment type="pathway">
    <text evidence="8 9 12 16">Glycolipid metabolism; sulfolipid-1 biosynthesis.</text>
</comment>
<comment type="induction">
    <text evidence="7 10">Up-regulated by the PhoP/PhoR two-component system (PubMed:16573683). Expressed in response to phagocytosis by human macrophages (PubMed:10500215).</text>
</comment>
<comment type="disruption phenotype">
    <text evidence="8 12">Disruption mutant does not synthesize sulfolipids (PubMed:11278910, PubMed:24028583). Mutant is incapable of producing hepta- and octamethyl phthioceranic acids and hydroxyphthioceranic acids, which are the major acyl constituents of sulfolipids (PubMed:11278910).</text>
</comment>
<comment type="miscellaneous">
    <text evidence="11">Was identified as a high-confidence drug target.</text>
</comment>
<feature type="chain" id="PRO_0000329012" description="Phthioceranic/hydroxyphthioceranic acid synthase">
    <location>
        <begin position="1"/>
        <end position="2126"/>
    </location>
</feature>
<feature type="domain" description="Ketosynthase family 3 (KS3)" evidence="5">
    <location>
        <begin position="24"/>
        <end position="447"/>
    </location>
</feature>
<feature type="domain" description="PKS/mFAS DH" evidence="6">
    <location>
        <begin position="914"/>
        <end position="1198"/>
    </location>
</feature>
<feature type="domain" description="Carrier" evidence="4">
    <location>
        <begin position="2040"/>
        <end position="2126"/>
    </location>
</feature>
<feature type="region of interest" description="Linker domain (LD)" evidence="1">
    <location>
        <begin position="449"/>
        <end position="549"/>
    </location>
</feature>
<feature type="region of interest" description="Acyltransferase (AT)" evidence="1">
    <location>
        <begin position="550"/>
        <end position="849"/>
    </location>
</feature>
<feature type="region of interest" description="Dehydratase (DH)" evidence="1">
    <location>
        <begin position="909"/>
        <end position="1191"/>
    </location>
</feature>
<feature type="region of interest" description="N-terminal hotdog fold" evidence="6">
    <location>
        <begin position="914"/>
        <end position="1032"/>
    </location>
</feature>
<feature type="region of interest" description="C-terminal hotdog fold" evidence="6">
    <location>
        <begin position="1051"/>
        <end position="1198"/>
    </location>
</feature>
<feature type="region of interest" description="Pseudo beta-ketoacyl reductase (PsiKR)" evidence="1">
    <location>
        <begin position="1227"/>
        <end position="1398"/>
    </location>
</feature>
<feature type="region of interest" description="Enoylreductase (ER)" evidence="1">
    <location>
        <begin position="1426"/>
        <end position="1750"/>
    </location>
</feature>
<feature type="region of interest" description="Beta-ketoacyl reductase (KR)" evidence="1">
    <location>
        <begin position="1772"/>
        <end position="2019"/>
    </location>
</feature>
<feature type="active site" description="Acyl-thioester intermediate; for beta-ketoacyl synthase activity" evidence="5">
    <location>
        <position position="196"/>
    </location>
</feature>
<feature type="active site" description="For beta-ketoacyl synthase activity" evidence="5">
    <location>
        <position position="331"/>
    </location>
</feature>
<feature type="active site" description="For beta-ketoacyl synthase activity" evidence="5">
    <location>
        <position position="367"/>
    </location>
</feature>
<feature type="active site" description="Acyl-ester intermediate; for acyltransferase activity" evidence="1">
    <location>
        <position position="641"/>
    </location>
</feature>
<feature type="active site" description="Proton acceptor; for dehydratase activity" evidence="6">
    <location>
        <position position="947"/>
    </location>
</feature>
<feature type="active site" description="Proton donor; for dehydratase activity" evidence="6">
    <location>
        <position position="1115"/>
    </location>
</feature>
<feature type="binding site" evidence="3">
    <location>
        <begin position="1780"/>
        <end position="1783"/>
    </location>
    <ligand>
        <name>NADP(+)</name>
        <dbReference type="ChEBI" id="CHEBI:58349"/>
    </ligand>
</feature>
<feature type="binding site" evidence="3">
    <location>
        <begin position="1803"/>
        <end position="1806"/>
    </location>
    <ligand>
        <name>NADP(+)</name>
        <dbReference type="ChEBI" id="CHEBI:58349"/>
    </ligand>
</feature>
<feature type="binding site" evidence="3">
    <location>
        <begin position="1831"/>
        <end position="1832"/>
    </location>
    <ligand>
        <name>NADP(+)</name>
        <dbReference type="ChEBI" id="CHEBI:58349"/>
    </ligand>
</feature>
<feature type="binding site" evidence="3">
    <location>
        <begin position="1904"/>
        <end position="1905"/>
    </location>
    <ligand>
        <name>NADP(+)</name>
        <dbReference type="ChEBI" id="CHEBI:58349"/>
    </ligand>
</feature>
<feature type="modified residue" description="O-(pantetheine 4'-phosphoryl)serine" evidence="4">
    <location>
        <position position="2075"/>
    </location>
</feature>
<name>PHAS_MYCTU</name>